<feature type="transit peptide" description="Mitochondrion" evidence="1">
    <location>
        <begin position="1"/>
        <end position="30"/>
    </location>
</feature>
<feature type="chain" id="PRO_0000010356" description="Succinate dehydrogenase [ubiquinone] iron-sulfur subunit, mitochondrial">
    <location>
        <begin position="31"/>
        <end position="282"/>
    </location>
</feature>
<feature type="domain" description="2Fe-2S ferredoxin-type" evidence="5">
    <location>
        <begin position="42"/>
        <end position="135"/>
    </location>
</feature>
<feature type="domain" description="4Fe-4S ferredoxin-type" evidence="6">
    <location>
        <begin position="178"/>
        <end position="208"/>
    </location>
</feature>
<feature type="region of interest" description="Interaction with SDHAF1" evidence="1">
    <location>
        <begin position="148"/>
        <end position="220"/>
    </location>
</feature>
<feature type="binding site" evidence="2">
    <location>
        <position position="95"/>
    </location>
    <ligand>
        <name>[2Fe-2S] cluster</name>
        <dbReference type="ChEBI" id="CHEBI:190135"/>
    </ligand>
</feature>
<feature type="binding site" evidence="2">
    <location>
        <position position="100"/>
    </location>
    <ligand>
        <name>[2Fe-2S] cluster</name>
        <dbReference type="ChEBI" id="CHEBI:190135"/>
    </ligand>
</feature>
<feature type="binding site" evidence="2">
    <location>
        <position position="103"/>
    </location>
    <ligand>
        <name>[2Fe-2S] cluster</name>
        <dbReference type="ChEBI" id="CHEBI:190135"/>
    </ligand>
</feature>
<feature type="binding site" evidence="2">
    <location>
        <position position="115"/>
    </location>
    <ligand>
        <name>[2Fe-2S] cluster</name>
        <dbReference type="ChEBI" id="CHEBI:190135"/>
    </ligand>
</feature>
<feature type="binding site" evidence="2">
    <location>
        <position position="188"/>
    </location>
    <ligand>
        <name>[4Fe-4S] cluster</name>
        <dbReference type="ChEBI" id="CHEBI:49883"/>
    </ligand>
</feature>
<feature type="binding site" evidence="2">
    <location>
        <position position="191"/>
    </location>
    <ligand>
        <name>[4Fe-4S] cluster</name>
        <dbReference type="ChEBI" id="CHEBI:49883"/>
    </ligand>
</feature>
<feature type="binding site" evidence="2">
    <location>
        <position position="194"/>
    </location>
    <ligand>
        <name>[4Fe-4S] cluster</name>
        <dbReference type="ChEBI" id="CHEBI:49883"/>
    </ligand>
</feature>
<feature type="binding site" evidence="2">
    <location>
        <position position="198"/>
    </location>
    <ligand>
        <name>[3Fe-4S] cluster</name>
        <dbReference type="ChEBI" id="CHEBI:21137"/>
    </ligand>
</feature>
<feature type="binding site" evidence="2">
    <location>
        <position position="203"/>
    </location>
    <ligand>
        <name>a ubiquinone</name>
        <dbReference type="ChEBI" id="CHEBI:16389"/>
        <note>ligand shared with DHSD</note>
    </ligand>
</feature>
<feature type="binding site" evidence="2">
    <location>
        <position position="245"/>
    </location>
    <ligand>
        <name>[3Fe-4S] cluster</name>
        <dbReference type="ChEBI" id="CHEBI:21137"/>
    </ligand>
</feature>
<feature type="binding site" evidence="2">
    <location>
        <position position="251"/>
    </location>
    <ligand>
        <name>[3Fe-4S] cluster</name>
        <dbReference type="ChEBI" id="CHEBI:21137"/>
    </ligand>
</feature>
<feature type="binding site" evidence="2">
    <location>
        <position position="255"/>
    </location>
    <ligand>
        <name>[4Fe-4S] cluster</name>
        <dbReference type="ChEBI" id="CHEBI:49883"/>
    </ligand>
</feature>
<feature type="modified residue" description="N6-acetyllysine" evidence="8">
    <location>
        <position position="53"/>
    </location>
</feature>
<feature type="modified residue" description="N6-acetyllysine" evidence="8">
    <location>
        <position position="57"/>
    </location>
</feature>
<feature type="sequence conflict" description="In Ref. 1; BAB22534." evidence="7" ref="1">
    <original>R</original>
    <variation>K</variation>
    <location>
        <position position="40"/>
    </location>
</feature>
<evidence type="ECO:0000250" key="1">
    <source>
        <dbReference type="UniProtKB" id="P21912"/>
    </source>
</evidence>
<evidence type="ECO:0000250" key="2">
    <source>
        <dbReference type="UniProtKB" id="Q007T0"/>
    </source>
</evidence>
<evidence type="ECO:0000250" key="3">
    <source>
        <dbReference type="UniProtKB" id="Q3T189"/>
    </source>
</evidence>
<evidence type="ECO:0000250" key="4">
    <source>
        <dbReference type="UniProtKB" id="Q9YHT2"/>
    </source>
</evidence>
<evidence type="ECO:0000255" key="5">
    <source>
        <dbReference type="PROSITE-ProRule" id="PRU00465"/>
    </source>
</evidence>
<evidence type="ECO:0000255" key="6">
    <source>
        <dbReference type="PROSITE-ProRule" id="PRU00711"/>
    </source>
</evidence>
<evidence type="ECO:0000305" key="7"/>
<evidence type="ECO:0007744" key="8">
    <source>
    </source>
</evidence>
<keyword id="KW-0001">2Fe-2S</keyword>
<keyword id="KW-0003">3Fe-4S</keyword>
<keyword id="KW-0004">4Fe-4S</keyword>
<keyword id="KW-0007">Acetylation</keyword>
<keyword id="KW-0903">Direct protein sequencing</keyword>
<keyword id="KW-0249">Electron transport</keyword>
<keyword id="KW-0408">Iron</keyword>
<keyword id="KW-0411">Iron-sulfur</keyword>
<keyword id="KW-0472">Membrane</keyword>
<keyword id="KW-0479">Metal-binding</keyword>
<keyword id="KW-0496">Mitochondrion</keyword>
<keyword id="KW-0999">Mitochondrion inner membrane</keyword>
<keyword id="KW-0560">Oxidoreductase</keyword>
<keyword id="KW-1185">Reference proteome</keyword>
<keyword id="KW-0809">Transit peptide</keyword>
<keyword id="KW-0813">Transport</keyword>
<keyword id="KW-0816">Tricarboxylic acid cycle</keyword>
<sequence length="282" mass="31814">MAATVGVSLKRGFPAAVLGRVGLQFQACRGAQTAAAAAPRIKKFAIYRWDPDKTGDKPRMQTYEVDLNKCGPMVLDALIKIKNEVDSTLTFRRSCREGICGSCAMNINGGNTLACTRRIDTDLSKVSKIYPLPHMYVIKDLVPDLSNFYAQYKSIEPYLKKKDESQEGKQQYLQSIEDREKLDGLYECILCACCSTSCPSYWWNGDKYLGPAVLMQAYRWMIDSRDDFTEERLAKLQDPFSVYRCHTIMNCTQTCPKGLNPGKAIAEIKKMMATYKEKRALA</sequence>
<organism>
    <name type="scientific">Mus musculus</name>
    <name type="common">Mouse</name>
    <dbReference type="NCBI Taxonomy" id="10090"/>
    <lineage>
        <taxon>Eukaryota</taxon>
        <taxon>Metazoa</taxon>
        <taxon>Chordata</taxon>
        <taxon>Craniata</taxon>
        <taxon>Vertebrata</taxon>
        <taxon>Euteleostomi</taxon>
        <taxon>Mammalia</taxon>
        <taxon>Eutheria</taxon>
        <taxon>Euarchontoglires</taxon>
        <taxon>Glires</taxon>
        <taxon>Rodentia</taxon>
        <taxon>Myomorpha</taxon>
        <taxon>Muroidea</taxon>
        <taxon>Muridae</taxon>
        <taxon>Murinae</taxon>
        <taxon>Mus</taxon>
        <taxon>Mus</taxon>
    </lineage>
</organism>
<dbReference type="EC" id="1.3.5.1" evidence="1"/>
<dbReference type="EC" id="1.1.5.-" evidence="3"/>
<dbReference type="EMBL" id="AK003052">
    <property type="protein sequence ID" value="BAB22534.1"/>
    <property type="molecule type" value="mRNA"/>
</dbReference>
<dbReference type="EMBL" id="AK003533">
    <property type="protein sequence ID" value="BAB22842.1"/>
    <property type="molecule type" value="mRNA"/>
</dbReference>
<dbReference type="EMBL" id="AK009660">
    <property type="protein sequence ID" value="BAB26422.1"/>
    <property type="molecule type" value="mRNA"/>
</dbReference>
<dbReference type="EMBL" id="AK153045">
    <property type="protein sequence ID" value="BAE31674.1"/>
    <property type="molecule type" value="mRNA"/>
</dbReference>
<dbReference type="EMBL" id="AK169252">
    <property type="protein sequence ID" value="BAE41016.1"/>
    <property type="molecule type" value="mRNA"/>
</dbReference>
<dbReference type="EMBL" id="BC013509">
    <property type="protein sequence ID" value="AAH13509.1"/>
    <property type="molecule type" value="mRNA"/>
</dbReference>
<dbReference type="EMBL" id="BC051934">
    <property type="protein sequence ID" value="AAH51934.1"/>
    <property type="molecule type" value="mRNA"/>
</dbReference>
<dbReference type="CCDS" id="CCDS18858.1"/>
<dbReference type="PIR" id="PT0094">
    <property type="entry name" value="PT0094"/>
</dbReference>
<dbReference type="RefSeq" id="NP_075863.2">
    <property type="nucleotide sequence ID" value="NM_023374.3"/>
</dbReference>
<dbReference type="SMR" id="Q9CQA3"/>
<dbReference type="BioGRID" id="212362">
    <property type="interactions" value="86"/>
</dbReference>
<dbReference type="ComplexPortal" id="CPX-562">
    <property type="entry name" value="Mitochondrial respiratory chain complex II"/>
</dbReference>
<dbReference type="CORUM" id="Q9CQA3"/>
<dbReference type="FunCoup" id="Q9CQA3">
    <property type="interactions" value="2088"/>
</dbReference>
<dbReference type="IntAct" id="Q9CQA3">
    <property type="interactions" value="8"/>
</dbReference>
<dbReference type="STRING" id="10090.ENSMUSP00000010007"/>
<dbReference type="GlyGen" id="Q9CQA3">
    <property type="glycosylation" value="1 site, 1 O-linked glycan (1 site)"/>
</dbReference>
<dbReference type="iPTMnet" id="Q9CQA3"/>
<dbReference type="MetOSite" id="Q9CQA3"/>
<dbReference type="PhosphoSitePlus" id="Q9CQA3"/>
<dbReference type="SwissPalm" id="Q9CQA3"/>
<dbReference type="REPRODUCTION-2DPAGE" id="Q9CQA3"/>
<dbReference type="jPOST" id="Q9CQA3"/>
<dbReference type="PaxDb" id="10090-ENSMUSP00000010007"/>
<dbReference type="PeptideAtlas" id="Q9CQA3"/>
<dbReference type="ProteomicsDB" id="256726"/>
<dbReference type="Pumba" id="Q9CQA3"/>
<dbReference type="Antibodypedia" id="1264">
    <property type="antibodies" value="617 antibodies from 40 providers"/>
</dbReference>
<dbReference type="DNASU" id="67680"/>
<dbReference type="Ensembl" id="ENSMUST00000010007.9">
    <property type="protein sequence ID" value="ENSMUSP00000010007.9"/>
    <property type="gene ID" value="ENSMUSG00000009863.15"/>
</dbReference>
<dbReference type="GeneID" id="67680"/>
<dbReference type="KEGG" id="mmu:67680"/>
<dbReference type="UCSC" id="uc008vnl.1">
    <property type="organism name" value="mouse"/>
</dbReference>
<dbReference type="AGR" id="MGI:1914930"/>
<dbReference type="CTD" id="6390"/>
<dbReference type="MGI" id="MGI:1914930">
    <property type="gene designation" value="Sdhb"/>
</dbReference>
<dbReference type="VEuPathDB" id="HostDB:ENSMUSG00000009863"/>
<dbReference type="eggNOG" id="KOG3049">
    <property type="taxonomic scope" value="Eukaryota"/>
</dbReference>
<dbReference type="GeneTree" id="ENSGT00390000013558"/>
<dbReference type="HOGENOM" id="CLU_044838_0_2_1"/>
<dbReference type="InParanoid" id="Q9CQA3"/>
<dbReference type="OMA" id="DGQYFGP"/>
<dbReference type="OrthoDB" id="1696654at2759"/>
<dbReference type="PhylomeDB" id="Q9CQA3"/>
<dbReference type="TreeFam" id="TF300754"/>
<dbReference type="Reactome" id="R-MMU-71403">
    <property type="pathway name" value="Citric acid cycle (TCA cycle)"/>
</dbReference>
<dbReference type="Reactome" id="R-MMU-9854311">
    <property type="pathway name" value="Maturation of TCA enzymes and regulation of TCA cycle"/>
</dbReference>
<dbReference type="UniPathway" id="UPA00223">
    <property type="reaction ID" value="UER01006"/>
</dbReference>
<dbReference type="BioGRID-ORCS" id="67680">
    <property type="hits" value="28 hits in 81 CRISPR screens"/>
</dbReference>
<dbReference type="CD-CODE" id="CE726F99">
    <property type="entry name" value="Postsynaptic density"/>
</dbReference>
<dbReference type="ChiTaRS" id="Sdhb">
    <property type="organism name" value="mouse"/>
</dbReference>
<dbReference type="PRO" id="PR:Q9CQA3"/>
<dbReference type="Proteomes" id="UP000000589">
    <property type="component" value="Chromosome 4"/>
</dbReference>
<dbReference type="RNAct" id="Q9CQA3">
    <property type="molecule type" value="protein"/>
</dbReference>
<dbReference type="Bgee" id="ENSMUSG00000009863">
    <property type="expression patterns" value="Expressed in heart right ventricle and 274 other cell types or tissues"/>
</dbReference>
<dbReference type="GO" id="GO:0005743">
    <property type="term" value="C:mitochondrial inner membrane"/>
    <property type="evidence" value="ECO:0007005"/>
    <property type="project" value="MGI"/>
</dbReference>
<dbReference type="GO" id="GO:0005739">
    <property type="term" value="C:mitochondrion"/>
    <property type="evidence" value="ECO:0000314"/>
    <property type="project" value="MGI"/>
</dbReference>
<dbReference type="GO" id="GO:0005654">
    <property type="term" value="C:nucleoplasm"/>
    <property type="evidence" value="ECO:0007669"/>
    <property type="project" value="Ensembl"/>
</dbReference>
<dbReference type="GO" id="GO:0005886">
    <property type="term" value="C:plasma membrane"/>
    <property type="evidence" value="ECO:0007669"/>
    <property type="project" value="Ensembl"/>
</dbReference>
<dbReference type="GO" id="GO:0045273">
    <property type="term" value="C:respiratory chain complex II (succinate dehydrogenase)"/>
    <property type="evidence" value="ECO:0000314"/>
    <property type="project" value="MGI"/>
</dbReference>
<dbReference type="GO" id="GO:0051537">
    <property type="term" value="F:2 iron, 2 sulfur cluster binding"/>
    <property type="evidence" value="ECO:0000250"/>
    <property type="project" value="UniProtKB"/>
</dbReference>
<dbReference type="GO" id="GO:0051538">
    <property type="term" value="F:3 iron, 4 sulfur cluster binding"/>
    <property type="evidence" value="ECO:0000250"/>
    <property type="project" value="UniProtKB"/>
</dbReference>
<dbReference type="GO" id="GO:0051539">
    <property type="term" value="F:4 iron, 4 sulfur cluster binding"/>
    <property type="evidence" value="ECO:0000250"/>
    <property type="project" value="UniProtKB"/>
</dbReference>
<dbReference type="GO" id="GO:0009055">
    <property type="term" value="F:electron transfer activity"/>
    <property type="evidence" value="ECO:0007669"/>
    <property type="project" value="InterPro"/>
</dbReference>
<dbReference type="GO" id="GO:0046872">
    <property type="term" value="F:metal ion binding"/>
    <property type="evidence" value="ECO:0007669"/>
    <property type="project" value="UniProtKB-KW"/>
</dbReference>
<dbReference type="GO" id="GO:0008177">
    <property type="term" value="F:succinate dehydrogenase (quinone) activity"/>
    <property type="evidence" value="ECO:0000250"/>
    <property type="project" value="UniProtKB"/>
</dbReference>
<dbReference type="GO" id="GO:0048039">
    <property type="term" value="F:ubiquinone binding"/>
    <property type="evidence" value="ECO:0000250"/>
    <property type="project" value="UniProtKB"/>
</dbReference>
<dbReference type="GO" id="GO:0006121">
    <property type="term" value="P:mitochondrial electron transport, succinate to ubiquinone"/>
    <property type="evidence" value="ECO:0000303"/>
    <property type="project" value="ComplexPortal"/>
</dbReference>
<dbReference type="GO" id="GO:0042776">
    <property type="term" value="P:proton motive force-driven mitochondrial ATP synthesis"/>
    <property type="evidence" value="ECO:0000303"/>
    <property type="project" value="ComplexPortal"/>
</dbReference>
<dbReference type="GO" id="GO:0006105">
    <property type="term" value="P:succinate metabolic process"/>
    <property type="evidence" value="ECO:0007669"/>
    <property type="project" value="Ensembl"/>
</dbReference>
<dbReference type="GO" id="GO:0006099">
    <property type="term" value="P:tricarboxylic acid cycle"/>
    <property type="evidence" value="ECO:0000303"/>
    <property type="project" value="ComplexPortal"/>
</dbReference>
<dbReference type="CDD" id="cd00207">
    <property type="entry name" value="fer2"/>
    <property type="match status" value="1"/>
</dbReference>
<dbReference type="FunFam" id="1.10.1060.10:FF:000029">
    <property type="entry name" value="Succinate dehydrogenase [ubiquinone] iron-sulfur subunit, mitochondrial"/>
    <property type="match status" value="1"/>
</dbReference>
<dbReference type="FunFam" id="3.10.20.30:FF:000007">
    <property type="entry name" value="Succinate dehydrogenase [ubiquinone] iron-sulfur subunit, mitochondrial"/>
    <property type="match status" value="1"/>
</dbReference>
<dbReference type="Gene3D" id="3.10.20.30">
    <property type="match status" value="1"/>
</dbReference>
<dbReference type="Gene3D" id="1.10.1060.10">
    <property type="entry name" value="Alpha-helical ferredoxin"/>
    <property type="match status" value="1"/>
</dbReference>
<dbReference type="InterPro" id="IPR036010">
    <property type="entry name" value="2Fe-2S_ferredoxin-like_sf"/>
</dbReference>
<dbReference type="InterPro" id="IPR001041">
    <property type="entry name" value="2Fe-2S_ferredoxin-type"/>
</dbReference>
<dbReference type="InterPro" id="IPR006058">
    <property type="entry name" value="2Fe2S_fd_BS"/>
</dbReference>
<dbReference type="InterPro" id="IPR017896">
    <property type="entry name" value="4Fe4S_Fe-S-bd"/>
</dbReference>
<dbReference type="InterPro" id="IPR017900">
    <property type="entry name" value="4Fe4S_Fe_S_CS"/>
</dbReference>
<dbReference type="InterPro" id="IPR012675">
    <property type="entry name" value="Beta-grasp_dom_sf"/>
</dbReference>
<dbReference type="InterPro" id="IPR009051">
    <property type="entry name" value="Helical_ferredxn"/>
</dbReference>
<dbReference type="InterPro" id="IPR050573">
    <property type="entry name" value="SDH/FRD_Iron-Sulfur"/>
</dbReference>
<dbReference type="InterPro" id="IPR004489">
    <property type="entry name" value="Succ_DH/fum_Rdtase_Fe-S"/>
</dbReference>
<dbReference type="InterPro" id="IPR025192">
    <property type="entry name" value="Succ_DH/fum_Rdtase_N"/>
</dbReference>
<dbReference type="NCBIfam" id="TIGR00384">
    <property type="entry name" value="dhsB"/>
    <property type="match status" value="1"/>
</dbReference>
<dbReference type="NCBIfam" id="NF004616">
    <property type="entry name" value="PRK05950.1"/>
    <property type="match status" value="1"/>
</dbReference>
<dbReference type="PANTHER" id="PTHR11921:SF29">
    <property type="entry name" value="SUCCINATE DEHYDROGENASE [UBIQUINONE] IRON-SULFUR SUBUNIT, MITOCHONDRIAL"/>
    <property type="match status" value="1"/>
</dbReference>
<dbReference type="PANTHER" id="PTHR11921">
    <property type="entry name" value="SUCCINATE DEHYDROGENASE IRON-SULFUR PROTEIN"/>
    <property type="match status" value="1"/>
</dbReference>
<dbReference type="Pfam" id="PF13085">
    <property type="entry name" value="Fer2_3"/>
    <property type="match status" value="1"/>
</dbReference>
<dbReference type="Pfam" id="PF13534">
    <property type="entry name" value="Fer4_17"/>
    <property type="match status" value="1"/>
</dbReference>
<dbReference type="SUPFAM" id="SSF54292">
    <property type="entry name" value="2Fe-2S ferredoxin-like"/>
    <property type="match status" value="1"/>
</dbReference>
<dbReference type="SUPFAM" id="SSF46548">
    <property type="entry name" value="alpha-helical ferredoxin"/>
    <property type="match status" value="1"/>
</dbReference>
<dbReference type="PROSITE" id="PS00197">
    <property type="entry name" value="2FE2S_FER_1"/>
    <property type="match status" value="1"/>
</dbReference>
<dbReference type="PROSITE" id="PS51085">
    <property type="entry name" value="2FE2S_FER_2"/>
    <property type="match status" value="1"/>
</dbReference>
<dbReference type="PROSITE" id="PS00198">
    <property type="entry name" value="4FE4S_FER_1"/>
    <property type="match status" value="1"/>
</dbReference>
<dbReference type="PROSITE" id="PS51379">
    <property type="entry name" value="4FE4S_FER_2"/>
    <property type="match status" value="1"/>
</dbReference>
<name>SDHB_MOUSE</name>
<protein>
    <recommendedName>
        <fullName>Succinate dehydrogenase [ubiquinone] iron-sulfur subunit, mitochondrial</fullName>
        <ecNumber evidence="1">1.3.5.1</ecNumber>
    </recommendedName>
    <alternativeName>
        <fullName>Iron-sulfur subunit of complex II</fullName>
        <shortName>Ip</shortName>
    </alternativeName>
    <alternativeName>
        <fullName>Malate dehydrogenase [quinone] iron-sulfur subunit</fullName>
        <ecNumber evidence="3">1.1.5.-</ecNumber>
    </alternativeName>
</protein>
<proteinExistence type="evidence at protein level"/>
<gene>
    <name type="primary">Sdhb</name>
</gene>
<comment type="function">
    <text evidence="1 3">Iron-sulfur protein (IP) subunit of the succinate dehydrogenase complex (mitochondrial respiratory chain complex II), responsible for transferring electrons from succinate to ubiquinone (coenzyme Q) (By similarity). SDH also oxidizes malate to the non-canonical enol form of oxaloacetate, enol-oxaloacetate. Enol-oxaloacetate, which is a potent inhibitor of the succinate dehydrogenase activity, is further isomerized into keto-oxaloacetate (By similarity).</text>
</comment>
<comment type="catalytic activity">
    <reaction evidence="1">
        <text>a quinone + succinate = fumarate + a quinol</text>
        <dbReference type="Rhea" id="RHEA:40523"/>
        <dbReference type="ChEBI" id="CHEBI:24646"/>
        <dbReference type="ChEBI" id="CHEBI:29806"/>
        <dbReference type="ChEBI" id="CHEBI:30031"/>
        <dbReference type="ChEBI" id="CHEBI:132124"/>
        <dbReference type="EC" id="1.3.5.1"/>
    </reaction>
</comment>
<comment type="catalytic activity">
    <reaction evidence="3">
        <text>(R)-malate + a quinone = enol-oxaloacetate + a quinol</text>
        <dbReference type="Rhea" id="RHEA:79827"/>
        <dbReference type="ChEBI" id="CHEBI:15588"/>
        <dbReference type="ChEBI" id="CHEBI:17479"/>
        <dbReference type="ChEBI" id="CHEBI:24646"/>
        <dbReference type="ChEBI" id="CHEBI:132124"/>
    </reaction>
    <physiologicalReaction direction="left-to-right" evidence="3">
        <dbReference type="Rhea" id="RHEA:79828"/>
    </physiologicalReaction>
</comment>
<comment type="catalytic activity">
    <reaction evidence="3">
        <text>(S)-malate + a quinone = enol-oxaloacetate + a quinol</text>
        <dbReference type="Rhea" id="RHEA:79831"/>
        <dbReference type="ChEBI" id="CHEBI:15589"/>
        <dbReference type="ChEBI" id="CHEBI:17479"/>
        <dbReference type="ChEBI" id="CHEBI:24646"/>
        <dbReference type="ChEBI" id="CHEBI:132124"/>
    </reaction>
    <physiologicalReaction direction="left-to-right" evidence="3">
        <dbReference type="Rhea" id="RHEA:79832"/>
    </physiologicalReaction>
</comment>
<comment type="cofactor">
    <cofactor evidence="2">
        <name>[2Fe-2S] cluster</name>
        <dbReference type="ChEBI" id="CHEBI:190135"/>
    </cofactor>
    <text evidence="2">Binds 1 [2Fe-2S] cluster.</text>
</comment>
<comment type="cofactor">
    <cofactor evidence="2">
        <name>[3Fe-4S] cluster</name>
        <dbReference type="ChEBI" id="CHEBI:21137"/>
    </cofactor>
    <text evidence="2">Binds 1 [3Fe-4S] cluster.</text>
</comment>
<comment type="cofactor">
    <cofactor evidence="2">
        <name>[4Fe-4S] cluster</name>
        <dbReference type="ChEBI" id="CHEBI:49883"/>
    </cofactor>
    <text evidence="2">Binds 1 [4Fe-4S] cluster.</text>
</comment>
<comment type="activity regulation">
    <text evidence="3">Enol-oxaloacetate inhibits the succinate dehydrogenase activity.</text>
</comment>
<comment type="pathway">
    <text>Carbohydrate metabolism; tricarboxylic acid cycle; fumarate from succinate (eukaryal route): step 1/1.</text>
</comment>
<comment type="subunit">
    <text evidence="1 2">Component of complex II composed of four subunits: the flavoprotein (FP) SDHA, iron-sulfur protein (IP) SDHB, and a cytochrome b560 composed of SDHC and SDHD (By similarity). Interacts with SDHAF1; the interaction is required for iron-sulfur cluster incorporation into SDHB (By similarity).</text>
</comment>
<comment type="subcellular location">
    <subcellularLocation>
        <location evidence="4">Mitochondrion inner membrane</location>
        <topology evidence="4">Peripheral membrane protein</topology>
        <orientation evidence="4">Matrix side</orientation>
    </subcellularLocation>
</comment>
<comment type="similarity">
    <text evidence="7">Belongs to the succinate dehydrogenase/fumarate reductase iron-sulfur protein family.</text>
</comment>
<accession>Q9CQA3</accession>
<accession>Q3TF82</accession>
<accession>Q9DC91</accession>
<reference key="1">
    <citation type="journal article" date="2005" name="Science">
        <title>The transcriptional landscape of the mammalian genome.</title>
        <authorList>
            <person name="Carninci P."/>
            <person name="Kasukawa T."/>
            <person name="Katayama S."/>
            <person name="Gough J."/>
            <person name="Frith M.C."/>
            <person name="Maeda N."/>
            <person name="Oyama R."/>
            <person name="Ravasi T."/>
            <person name="Lenhard B."/>
            <person name="Wells C."/>
            <person name="Kodzius R."/>
            <person name="Shimokawa K."/>
            <person name="Bajic V.B."/>
            <person name="Brenner S.E."/>
            <person name="Batalov S."/>
            <person name="Forrest A.R."/>
            <person name="Zavolan M."/>
            <person name="Davis M.J."/>
            <person name="Wilming L.G."/>
            <person name="Aidinis V."/>
            <person name="Allen J.E."/>
            <person name="Ambesi-Impiombato A."/>
            <person name="Apweiler R."/>
            <person name="Aturaliya R.N."/>
            <person name="Bailey T.L."/>
            <person name="Bansal M."/>
            <person name="Baxter L."/>
            <person name="Beisel K.W."/>
            <person name="Bersano T."/>
            <person name="Bono H."/>
            <person name="Chalk A.M."/>
            <person name="Chiu K.P."/>
            <person name="Choudhary V."/>
            <person name="Christoffels A."/>
            <person name="Clutterbuck D.R."/>
            <person name="Crowe M.L."/>
            <person name="Dalla E."/>
            <person name="Dalrymple B.P."/>
            <person name="de Bono B."/>
            <person name="Della Gatta G."/>
            <person name="di Bernardo D."/>
            <person name="Down T."/>
            <person name="Engstrom P."/>
            <person name="Fagiolini M."/>
            <person name="Faulkner G."/>
            <person name="Fletcher C.F."/>
            <person name="Fukushima T."/>
            <person name="Furuno M."/>
            <person name="Futaki S."/>
            <person name="Gariboldi M."/>
            <person name="Georgii-Hemming P."/>
            <person name="Gingeras T.R."/>
            <person name="Gojobori T."/>
            <person name="Green R.E."/>
            <person name="Gustincich S."/>
            <person name="Harbers M."/>
            <person name="Hayashi Y."/>
            <person name="Hensch T.K."/>
            <person name="Hirokawa N."/>
            <person name="Hill D."/>
            <person name="Huminiecki L."/>
            <person name="Iacono M."/>
            <person name="Ikeo K."/>
            <person name="Iwama A."/>
            <person name="Ishikawa T."/>
            <person name="Jakt M."/>
            <person name="Kanapin A."/>
            <person name="Katoh M."/>
            <person name="Kawasawa Y."/>
            <person name="Kelso J."/>
            <person name="Kitamura H."/>
            <person name="Kitano H."/>
            <person name="Kollias G."/>
            <person name="Krishnan S.P."/>
            <person name="Kruger A."/>
            <person name="Kummerfeld S.K."/>
            <person name="Kurochkin I.V."/>
            <person name="Lareau L.F."/>
            <person name="Lazarevic D."/>
            <person name="Lipovich L."/>
            <person name="Liu J."/>
            <person name="Liuni S."/>
            <person name="McWilliam S."/>
            <person name="Madan Babu M."/>
            <person name="Madera M."/>
            <person name="Marchionni L."/>
            <person name="Matsuda H."/>
            <person name="Matsuzawa S."/>
            <person name="Miki H."/>
            <person name="Mignone F."/>
            <person name="Miyake S."/>
            <person name="Morris K."/>
            <person name="Mottagui-Tabar S."/>
            <person name="Mulder N."/>
            <person name="Nakano N."/>
            <person name="Nakauchi H."/>
            <person name="Ng P."/>
            <person name="Nilsson R."/>
            <person name="Nishiguchi S."/>
            <person name="Nishikawa S."/>
            <person name="Nori F."/>
            <person name="Ohara O."/>
            <person name="Okazaki Y."/>
            <person name="Orlando V."/>
            <person name="Pang K.C."/>
            <person name="Pavan W.J."/>
            <person name="Pavesi G."/>
            <person name="Pesole G."/>
            <person name="Petrovsky N."/>
            <person name="Piazza S."/>
            <person name="Reed J."/>
            <person name="Reid J.F."/>
            <person name="Ring B.Z."/>
            <person name="Ringwald M."/>
            <person name="Rost B."/>
            <person name="Ruan Y."/>
            <person name="Salzberg S.L."/>
            <person name="Sandelin A."/>
            <person name="Schneider C."/>
            <person name="Schoenbach C."/>
            <person name="Sekiguchi K."/>
            <person name="Semple C.A."/>
            <person name="Seno S."/>
            <person name="Sessa L."/>
            <person name="Sheng Y."/>
            <person name="Shibata Y."/>
            <person name="Shimada H."/>
            <person name="Shimada K."/>
            <person name="Silva D."/>
            <person name="Sinclair B."/>
            <person name="Sperling S."/>
            <person name="Stupka E."/>
            <person name="Sugiura K."/>
            <person name="Sultana R."/>
            <person name="Takenaka Y."/>
            <person name="Taki K."/>
            <person name="Tammoja K."/>
            <person name="Tan S.L."/>
            <person name="Tang S."/>
            <person name="Taylor M.S."/>
            <person name="Tegner J."/>
            <person name="Teichmann S.A."/>
            <person name="Ueda H.R."/>
            <person name="van Nimwegen E."/>
            <person name="Verardo R."/>
            <person name="Wei C.L."/>
            <person name="Yagi K."/>
            <person name="Yamanishi H."/>
            <person name="Zabarovsky E."/>
            <person name="Zhu S."/>
            <person name="Zimmer A."/>
            <person name="Hide W."/>
            <person name="Bult C."/>
            <person name="Grimmond S.M."/>
            <person name="Teasdale R.D."/>
            <person name="Liu E.T."/>
            <person name="Brusic V."/>
            <person name="Quackenbush J."/>
            <person name="Wahlestedt C."/>
            <person name="Mattick J.S."/>
            <person name="Hume D.A."/>
            <person name="Kai C."/>
            <person name="Sasaki D."/>
            <person name="Tomaru Y."/>
            <person name="Fukuda S."/>
            <person name="Kanamori-Katayama M."/>
            <person name="Suzuki M."/>
            <person name="Aoki J."/>
            <person name="Arakawa T."/>
            <person name="Iida J."/>
            <person name="Imamura K."/>
            <person name="Itoh M."/>
            <person name="Kato T."/>
            <person name="Kawaji H."/>
            <person name="Kawagashira N."/>
            <person name="Kawashima T."/>
            <person name="Kojima M."/>
            <person name="Kondo S."/>
            <person name="Konno H."/>
            <person name="Nakano K."/>
            <person name="Ninomiya N."/>
            <person name="Nishio T."/>
            <person name="Okada M."/>
            <person name="Plessy C."/>
            <person name="Shibata K."/>
            <person name="Shiraki T."/>
            <person name="Suzuki S."/>
            <person name="Tagami M."/>
            <person name="Waki K."/>
            <person name="Watahiki A."/>
            <person name="Okamura-Oho Y."/>
            <person name="Suzuki H."/>
            <person name="Kawai J."/>
            <person name="Hayashizaki Y."/>
        </authorList>
    </citation>
    <scope>NUCLEOTIDE SEQUENCE [LARGE SCALE MRNA]</scope>
    <source>
        <strain>C57BL/6J</strain>
        <tissue>Amnion</tissue>
        <tissue>Bone marrow</tissue>
        <tissue>Brain</tissue>
        <tissue>Tongue</tissue>
    </source>
</reference>
<reference key="2">
    <citation type="journal article" date="2004" name="Genome Res.">
        <title>The status, quality, and expansion of the NIH full-length cDNA project: the Mammalian Gene Collection (MGC).</title>
        <authorList>
            <consortium name="The MGC Project Team"/>
        </authorList>
    </citation>
    <scope>NUCLEOTIDE SEQUENCE [LARGE SCALE MRNA]</scope>
    <source>
        <strain>C57BL/6J</strain>
        <strain>FVB/N</strain>
        <tissue>Brain</tissue>
        <tissue>Colon</tissue>
    </source>
</reference>
<reference key="3">
    <citation type="submission" date="2009-01" db="UniProtKB">
        <authorList>
            <person name="Lubec G."/>
            <person name="Kang S.U."/>
            <person name="Sunyer B."/>
            <person name="Chen W.-Q."/>
        </authorList>
    </citation>
    <scope>PROTEIN SEQUENCE OF 49-92; 118-153; 170-179; 208-232 AND 245-257</scope>
    <scope>IDENTIFICATION BY MASS SPECTROMETRY</scope>
    <source>
        <strain>C57BL/6J</strain>
        <strain>OF1</strain>
        <tissue>Brain</tissue>
        <tissue>Hippocampus</tissue>
    </source>
</reference>
<reference key="4">
    <citation type="journal article" date="2010" name="Cell">
        <title>A tissue-specific atlas of mouse protein phosphorylation and expression.</title>
        <authorList>
            <person name="Huttlin E.L."/>
            <person name="Jedrychowski M.P."/>
            <person name="Elias J.E."/>
            <person name="Goswami T."/>
            <person name="Rad R."/>
            <person name="Beausoleil S.A."/>
            <person name="Villen J."/>
            <person name="Haas W."/>
            <person name="Sowa M.E."/>
            <person name="Gygi S.P."/>
        </authorList>
    </citation>
    <scope>IDENTIFICATION BY MASS SPECTROMETRY [LARGE SCALE ANALYSIS]</scope>
    <source>
        <tissue>Brain</tissue>
        <tissue>Brown adipose tissue</tissue>
        <tissue>Heart</tissue>
        <tissue>Kidney</tissue>
        <tissue>Liver</tissue>
        <tissue>Lung</tissue>
        <tissue>Pancreas</tissue>
        <tissue>Spleen</tissue>
        <tissue>Testis</tissue>
    </source>
</reference>
<reference key="5">
    <citation type="journal article" date="2013" name="Proc. Natl. Acad. Sci. U.S.A.">
        <title>Label-free quantitative proteomics of the lysine acetylome in mitochondria identifies substrates of SIRT3 in metabolic pathways.</title>
        <authorList>
            <person name="Rardin M.J."/>
            <person name="Newman J.C."/>
            <person name="Held J.M."/>
            <person name="Cusack M.P."/>
            <person name="Sorensen D.J."/>
            <person name="Li B."/>
            <person name="Schilling B."/>
            <person name="Mooney S.D."/>
            <person name="Kahn C.R."/>
            <person name="Verdin E."/>
            <person name="Gibson B.W."/>
        </authorList>
    </citation>
    <scope>ACETYLATION [LARGE SCALE ANALYSIS] AT LYS-53 AND LYS-57</scope>
    <scope>IDENTIFICATION BY MASS SPECTROMETRY [LARGE SCALE ANALYSIS]</scope>
    <source>
        <tissue>Liver</tissue>
    </source>
</reference>